<proteinExistence type="inferred from homology"/>
<protein>
    <recommendedName>
        <fullName>ATP synthase epsilon chain</fullName>
    </recommendedName>
    <alternativeName>
        <fullName>ATP synthase F1 sector epsilon subunit</fullName>
    </alternativeName>
    <alternativeName>
        <fullName>F-ATPase epsilon subunit</fullName>
    </alternativeName>
</protein>
<sequence length="88" mass="9341">MASSDKAFTLDIVTPQKLFFSGEINSVIAPGLNGLFQVLKGHAPLLAALKSGKVRLSLSDRSEDTFQIAGGFFEVSGNKAILLTEEVS</sequence>
<keyword id="KW-0066">ATP synthesis</keyword>
<keyword id="KW-0997">Cell inner membrane</keyword>
<keyword id="KW-1003">Cell membrane</keyword>
<keyword id="KW-0139">CF(1)</keyword>
<keyword id="KW-0375">Hydrogen ion transport</keyword>
<keyword id="KW-0406">Ion transport</keyword>
<keyword id="KW-0472">Membrane</keyword>
<keyword id="KW-1185">Reference proteome</keyword>
<keyword id="KW-0813">Transport</keyword>
<organism>
    <name type="scientific">Chlorobaculum tepidum (strain ATCC 49652 / DSM 12025 / NBRC 103806 / TLS)</name>
    <name type="common">Chlorobium tepidum</name>
    <dbReference type="NCBI Taxonomy" id="194439"/>
    <lineage>
        <taxon>Bacteria</taxon>
        <taxon>Pseudomonadati</taxon>
        <taxon>Chlorobiota</taxon>
        <taxon>Chlorobiia</taxon>
        <taxon>Chlorobiales</taxon>
        <taxon>Chlorobiaceae</taxon>
        <taxon>Chlorobaculum</taxon>
    </lineage>
</organism>
<gene>
    <name type="primary">atpC</name>
    <name type="ordered locus">CT2235</name>
</gene>
<comment type="function">
    <text evidence="1">Produces ATP from ADP in the presence of a proton gradient across the membrane.</text>
</comment>
<comment type="subunit">
    <text>F-type ATPases have 2 components, CF(1) - the catalytic core - and CF(0) - the membrane proton channel. CF(1) has five subunits: alpha(3), beta(3), gamma(1), delta(1), epsilon(1). CF(0) has three main subunits: a, b and c.</text>
</comment>
<comment type="subcellular location">
    <subcellularLocation>
        <location evidence="1">Cell inner membrane</location>
        <topology evidence="1">Peripheral membrane protein</topology>
    </subcellularLocation>
</comment>
<comment type="similarity">
    <text evidence="2">Belongs to the ATPase epsilon chain family.</text>
</comment>
<accession>Q8KAC8</accession>
<name>ATPE_CHLTE</name>
<evidence type="ECO:0000250" key="1"/>
<evidence type="ECO:0000305" key="2"/>
<reference key="1">
    <citation type="journal article" date="2002" name="Proc. Natl. Acad. Sci. U.S.A.">
        <title>The complete genome sequence of Chlorobium tepidum TLS, a photosynthetic, anaerobic, green-sulfur bacterium.</title>
        <authorList>
            <person name="Eisen J.A."/>
            <person name="Nelson K.E."/>
            <person name="Paulsen I.T."/>
            <person name="Heidelberg J.F."/>
            <person name="Wu M."/>
            <person name="Dodson R.J."/>
            <person name="DeBoy R.T."/>
            <person name="Gwinn M.L."/>
            <person name="Nelson W.C."/>
            <person name="Haft D.H."/>
            <person name="Hickey E.K."/>
            <person name="Peterson J.D."/>
            <person name="Durkin A.S."/>
            <person name="Kolonay J.F."/>
            <person name="Yang F."/>
            <person name="Holt I.E."/>
            <person name="Umayam L.A."/>
            <person name="Mason T.M."/>
            <person name="Brenner M."/>
            <person name="Shea T.P."/>
            <person name="Parksey D.S."/>
            <person name="Nierman W.C."/>
            <person name="Feldblyum T.V."/>
            <person name="Hansen C.L."/>
            <person name="Craven M.B."/>
            <person name="Radune D."/>
            <person name="Vamathevan J.J."/>
            <person name="Khouri H.M."/>
            <person name="White O."/>
            <person name="Gruber T.M."/>
            <person name="Ketchum K.A."/>
            <person name="Venter J.C."/>
            <person name="Tettelin H."/>
            <person name="Bryant D.A."/>
            <person name="Fraser C.M."/>
        </authorList>
    </citation>
    <scope>NUCLEOTIDE SEQUENCE [LARGE SCALE GENOMIC DNA]</scope>
    <source>
        <strain>ATCC 49652 / DSM 12025 / NBRC 103806 / TLS</strain>
    </source>
</reference>
<feature type="chain" id="PRO_0000188120" description="ATP synthase epsilon chain">
    <location>
        <begin position="1"/>
        <end position="88"/>
    </location>
</feature>
<dbReference type="EMBL" id="AE006470">
    <property type="protein sequence ID" value="AAM73451.1"/>
    <property type="molecule type" value="Genomic_DNA"/>
</dbReference>
<dbReference type="RefSeq" id="NP_663109.1">
    <property type="nucleotide sequence ID" value="NC_002932.3"/>
</dbReference>
<dbReference type="RefSeq" id="WP_010933888.1">
    <property type="nucleotide sequence ID" value="NC_002932.3"/>
</dbReference>
<dbReference type="SMR" id="Q8KAC8"/>
<dbReference type="STRING" id="194439.CT2235"/>
<dbReference type="EnsemblBacteria" id="AAM73451">
    <property type="protein sequence ID" value="AAM73451"/>
    <property type="gene ID" value="CT2235"/>
</dbReference>
<dbReference type="KEGG" id="cte:CT2235"/>
<dbReference type="PATRIC" id="fig|194439.7.peg.2028"/>
<dbReference type="eggNOG" id="COG0355">
    <property type="taxonomic scope" value="Bacteria"/>
</dbReference>
<dbReference type="HOGENOM" id="CLU_084338_4_1_10"/>
<dbReference type="OrthoDB" id="5294255at2"/>
<dbReference type="Proteomes" id="UP000001007">
    <property type="component" value="Chromosome"/>
</dbReference>
<dbReference type="GO" id="GO:0005886">
    <property type="term" value="C:plasma membrane"/>
    <property type="evidence" value="ECO:0007669"/>
    <property type="project" value="UniProtKB-SubCell"/>
</dbReference>
<dbReference type="GO" id="GO:0045259">
    <property type="term" value="C:proton-transporting ATP synthase complex"/>
    <property type="evidence" value="ECO:0007669"/>
    <property type="project" value="UniProtKB-KW"/>
</dbReference>
<dbReference type="GO" id="GO:0046933">
    <property type="term" value="F:proton-transporting ATP synthase activity, rotational mechanism"/>
    <property type="evidence" value="ECO:0007669"/>
    <property type="project" value="InterPro"/>
</dbReference>
<dbReference type="CDD" id="cd12152">
    <property type="entry name" value="F1-ATPase_delta"/>
    <property type="match status" value="1"/>
</dbReference>
<dbReference type="Gene3D" id="2.60.15.10">
    <property type="entry name" value="F0F1 ATP synthase delta/epsilon subunit, N-terminal"/>
    <property type="match status" value="1"/>
</dbReference>
<dbReference type="InterPro" id="IPR001469">
    <property type="entry name" value="ATP_synth_F1_dsu/esu"/>
</dbReference>
<dbReference type="InterPro" id="IPR020546">
    <property type="entry name" value="ATP_synth_F1_dsu/esu_N"/>
</dbReference>
<dbReference type="InterPro" id="IPR036771">
    <property type="entry name" value="ATPsynth_dsu/esu_N"/>
</dbReference>
<dbReference type="PANTHER" id="PTHR13822">
    <property type="entry name" value="ATP SYNTHASE DELTA/EPSILON CHAIN"/>
    <property type="match status" value="1"/>
</dbReference>
<dbReference type="PANTHER" id="PTHR13822:SF10">
    <property type="entry name" value="ATP SYNTHASE EPSILON CHAIN, CHLOROPLASTIC"/>
    <property type="match status" value="1"/>
</dbReference>
<dbReference type="Pfam" id="PF02823">
    <property type="entry name" value="ATP-synt_DE_N"/>
    <property type="match status" value="1"/>
</dbReference>
<dbReference type="SUPFAM" id="SSF51344">
    <property type="entry name" value="Epsilon subunit of F1F0-ATP synthase N-terminal domain"/>
    <property type="match status" value="1"/>
</dbReference>